<protein>
    <recommendedName>
        <fullName evidence="1">Glutamate--tRNA ligase 1</fullName>
        <ecNumber evidence="1">6.1.1.17</ecNumber>
    </recommendedName>
    <alternativeName>
        <fullName evidence="1">Glutamyl-tRNA synthetase 1</fullName>
        <shortName evidence="1">GluRS 1</shortName>
    </alternativeName>
</protein>
<accession>A9MB31</accession>
<proteinExistence type="inferred from homology"/>
<feature type="chain" id="PRO_0000367623" description="Glutamate--tRNA ligase 1">
    <location>
        <begin position="1"/>
        <end position="457"/>
    </location>
</feature>
<feature type="short sequence motif" description="'HIGH' region" evidence="1">
    <location>
        <begin position="9"/>
        <end position="19"/>
    </location>
</feature>
<feature type="short sequence motif" description="'KMSKS' region" evidence="1">
    <location>
        <begin position="250"/>
        <end position="254"/>
    </location>
</feature>
<feature type="binding site" evidence="1">
    <location>
        <position position="253"/>
    </location>
    <ligand>
        <name>ATP</name>
        <dbReference type="ChEBI" id="CHEBI:30616"/>
    </ligand>
</feature>
<sequence length="457" mass="50772">MTVTVRFAPSPTGYIHIGNTRTALSNWLYASKNNGKFILRYDDTDVERSKDEYAQAIAVDLDWLGVRPDRVEYQSKRFDIYAKAVEKLKTAGLLYACYETADELERRRKLRLARRLPPVYGREALKLTDAEKAALEAEGRKPHWRFLLPNFESDPFATQRTEVHWDDLVRGPQTVDLASMSDPILVREDGTYLYTLPSVVDDIDMGVTHIIRGDDHVTNTGVQISIFKALGATPPVFGHHNLLTTISGEGLSKRTGALSVGSLREAGYEPMAVASLAILIGTSESVTAAPDMAALAEHFDLASISKSSAKFDPSELDALNRSLLHEMPFEKAKPRLEALGICGAKAESFWLAVRGNLDRFSDVSDWWQVVSGDLPEAPDLSGEDRDFVRHAFDLLPPEPWNGQTWKSWTEAVKSATGRKGKNLFMPLRLALTGQAHGPELADLLVLVGLERTKSRRP</sequence>
<dbReference type="EC" id="6.1.1.17" evidence="1"/>
<dbReference type="EMBL" id="CP000872">
    <property type="protein sequence ID" value="ABX62084.1"/>
    <property type="molecule type" value="Genomic_DNA"/>
</dbReference>
<dbReference type="SMR" id="A9MB31"/>
<dbReference type="GeneID" id="55590708"/>
<dbReference type="KEGG" id="bcs:BCAN_A1031"/>
<dbReference type="HOGENOM" id="CLU_015768_6_1_5"/>
<dbReference type="PhylomeDB" id="A9MB31"/>
<dbReference type="Proteomes" id="UP000001385">
    <property type="component" value="Chromosome I"/>
</dbReference>
<dbReference type="GO" id="GO:0005737">
    <property type="term" value="C:cytoplasm"/>
    <property type="evidence" value="ECO:0007669"/>
    <property type="project" value="UniProtKB-SubCell"/>
</dbReference>
<dbReference type="GO" id="GO:0005524">
    <property type="term" value="F:ATP binding"/>
    <property type="evidence" value="ECO:0007669"/>
    <property type="project" value="UniProtKB-UniRule"/>
</dbReference>
<dbReference type="GO" id="GO:0004818">
    <property type="term" value="F:glutamate-tRNA ligase activity"/>
    <property type="evidence" value="ECO:0007669"/>
    <property type="project" value="UniProtKB-UniRule"/>
</dbReference>
<dbReference type="GO" id="GO:0000049">
    <property type="term" value="F:tRNA binding"/>
    <property type="evidence" value="ECO:0007669"/>
    <property type="project" value="InterPro"/>
</dbReference>
<dbReference type="GO" id="GO:0008270">
    <property type="term" value="F:zinc ion binding"/>
    <property type="evidence" value="ECO:0007669"/>
    <property type="project" value="InterPro"/>
</dbReference>
<dbReference type="GO" id="GO:0006424">
    <property type="term" value="P:glutamyl-tRNA aminoacylation"/>
    <property type="evidence" value="ECO:0007669"/>
    <property type="project" value="UniProtKB-UniRule"/>
</dbReference>
<dbReference type="CDD" id="cd00808">
    <property type="entry name" value="GluRS_core"/>
    <property type="match status" value="1"/>
</dbReference>
<dbReference type="Gene3D" id="1.10.10.350">
    <property type="match status" value="1"/>
</dbReference>
<dbReference type="Gene3D" id="3.40.50.620">
    <property type="entry name" value="HUPs"/>
    <property type="match status" value="1"/>
</dbReference>
<dbReference type="HAMAP" id="MF_00022">
    <property type="entry name" value="Glu_tRNA_synth_type1"/>
    <property type="match status" value="1"/>
</dbReference>
<dbReference type="InterPro" id="IPR045462">
    <property type="entry name" value="aa-tRNA-synth_I_cd-bd"/>
</dbReference>
<dbReference type="InterPro" id="IPR020751">
    <property type="entry name" value="aa-tRNA-synth_I_codon-bd_sub2"/>
</dbReference>
<dbReference type="InterPro" id="IPR001412">
    <property type="entry name" value="aa-tRNA-synth_I_CS"/>
</dbReference>
<dbReference type="InterPro" id="IPR008925">
    <property type="entry name" value="aa_tRNA-synth_I_cd-bd_sf"/>
</dbReference>
<dbReference type="InterPro" id="IPR004527">
    <property type="entry name" value="Glu-tRNA-ligase_bac/mito"/>
</dbReference>
<dbReference type="InterPro" id="IPR000924">
    <property type="entry name" value="Glu/Gln-tRNA-synth"/>
</dbReference>
<dbReference type="InterPro" id="IPR020058">
    <property type="entry name" value="Glu/Gln-tRNA-synth_Ib_cat-dom"/>
</dbReference>
<dbReference type="InterPro" id="IPR049940">
    <property type="entry name" value="GluQ/Sye"/>
</dbReference>
<dbReference type="InterPro" id="IPR033910">
    <property type="entry name" value="GluRS_core"/>
</dbReference>
<dbReference type="InterPro" id="IPR014729">
    <property type="entry name" value="Rossmann-like_a/b/a_fold"/>
</dbReference>
<dbReference type="NCBIfam" id="TIGR00464">
    <property type="entry name" value="gltX_bact"/>
    <property type="match status" value="1"/>
</dbReference>
<dbReference type="PANTHER" id="PTHR43311">
    <property type="entry name" value="GLUTAMATE--TRNA LIGASE"/>
    <property type="match status" value="1"/>
</dbReference>
<dbReference type="PANTHER" id="PTHR43311:SF2">
    <property type="entry name" value="GLUTAMATE--TRNA LIGASE, MITOCHONDRIAL-RELATED"/>
    <property type="match status" value="1"/>
</dbReference>
<dbReference type="Pfam" id="PF19269">
    <property type="entry name" value="Anticodon_2"/>
    <property type="match status" value="1"/>
</dbReference>
<dbReference type="Pfam" id="PF00749">
    <property type="entry name" value="tRNA-synt_1c"/>
    <property type="match status" value="1"/>
</dbReference>
<dbReference type="PRINTS" id="PR00987">
    <property type="entry name" value="TRNASYNTHGLU"/>
</dbReference>
<dbReference type="SUPFAM" id="SSF48163">
    <property type="entry name" value="An anticodon-binding domain of class I aminoacyl-tRNA synthetases"/>
    <property type="match status" value="1"/>
</dbReference>
<dbReference type="SUPFAM" id="SSF52374">
    <property type="entry name" value="Nucleotidylyl transferase"/>
    <property type="match status" value="1"/>
</dbReference>
<dbReference type="PROSITE" id="PS00178">
    <property type="entry name" value="AA_TRNA_LIGASE_I"/>
    <property type="match status" value="1"/>
</dbReference>
<name>SYE1_BRUC2</name>
<keyword id="KW-0030">Aminoacyl-tRNA synthetase</keyword>
<keyword id="KW-0067">ATP-binding</keyword>
<keyword id="KW-0963">Cytoplasm</keyword>
<keyword id="KW-0436">Ligase</keyword>
<keyword id="KW-0547">Nucleotide-binding</keyword>
<keyword id="KW-0648">Protein biosynthesis</keyword>
<keyword id="KW-1185">Reference proteome</keyword>
<comment type="function">
    <text evidence="1">Catalyzes the attachment of glutamate to tRNA(Glu) in a two-step reaction: glutamate is first activated by ATP to form Glu-AMP and then transferred to the acceptor end of tRNA(Glu).</text>
</comment>
<comment type="catalytic activity">
    <reaction evidence="1">
        <text>tRNA(Glu) + L-glutamate + ATP = L-glutamyl-tRNA(Glu) + AMP + diphosphate</text>
        <dbReference type="Rhea" id="RHEA:23540"/>
        <dbReference type="Rhea" id="RHEA-COMP:9663"/>
        <dbReference type="Rhea" id="RHEA-COMP:9680"/>
        <dbReference type="ChEBI" id="CHEBI:29985"/>
        <dbReference type="ChEBI" id="CHEBI:30616"/>
        <dbReference type="ChEBI" id="CHEBI:33019"/>
        <dbReference type="ChEBI" id="CHEBI:78442"/>
        <dbReference type="ChEBI" id="CHEBI:78520"/>
        <dbReference type="ChEBI" id="CHEBI:456215"/>
        <dbReference type="EC" id="6.1.1.17"/>
    </reaction>
</comment>
<comment type="subunit">
    <text evidence="1">Monomer.</text>
</comment>
<comment type="subcellular location">
    <subcellularLocation>
        <location evidence="1">Cytoplasm</location>
    </subcellularLocation>
</comment>
<comment type="similarity">
    <text evidence="1">Belongs to the class-I aminoacyl-tRNA synthetase family. Glutamate--tRNA ligase type 1 subfamily.</text>
</comment>
<organism>
    <name type="scientific">Brucella canis (strain ATCC 23365 / NCTC 10854 / RM-666)</name>
    <dbReference type="NCBI Taxonomy" id="483179"/>
    <lineage>
        <taxon>Bacteria</taxon>
        <taxon>Pseudomonadati</taxon>
        <taxon>Pseudomonadota</taxon>
        <taxon>Alphaproteobacteria</taxon>
        <taxon>Hyphomicrobiales</taxon>
        <taxon>Brucellaceae</taxon>
        <taxon>Brucella/Ochrobactrum group</taxon>
        <taxon>Brucella</taxon>
    </lineage>
</organism>
<reference key="1">
    <citation type="submission" date="2007-10" db="EMBL/GenBank/DDBJ databases">
        <title>Brucella canis ATCC 23365 whole genome shotgun sequencing project.</title>
        <authorList>
            <person name="Setubal J.C."/>
            <person name="Bowns C."/>
            <person name="Boyle S."/>
            <person name="Crasta O.R."/>
            <person name="Czar M.J."/>
            <person name="Dharmanolla C."/>
            <person name="Gillespie J.J."/>
            <person name="Kenyon R.W."/>
            <person name="Lu J."/>
            <person name="Mane S."/>
            <person name="Mohapatra S."/>
            <person name="Nagrani S."/>
            <person name="Purkayastha A."/>
            <person name="Rajasimha H.K."/>
            <person name="Shallom J.M."/>
            <person name="Shallom S."/>
            <person name="Shukla M."/>
            <person name="Snyder E.E."/>
            <person name="Sobral B.W."/>
            <person name="Wattam A.R."/>
            <person name="Will R."/>
            <person name="Williams K."/>
            <person name="Yoo H."/>
            <person name="Bruce D."/>
            <person name="Detter C."/>
            <person name="Munk C."/>
            <person name="Brettin T.S."/>
        </authorList>
    </citation>
    <scope>NUCLEOTIDE SEQUENCE [LARGE SCALE GENOMIC DNA]</scope>
    <source>
        <strain>ATCC 23365 / NCTC 10854 / RM-666</strain>
    </source>
</reference>
<gene>
    <name evidence="1" type="primary">gltX1</name>
    <name type="ordered locus">BCAN_A1031</name>
</gene>
<evidence type="ECO:0000255" key="1">
    <source>
        <dbReference type="HAMAP-Rule" id="MF_00022"/>
    </source>
</evidence>